<organism>
    <name type="scientific">Prochlorococcus marinus (strain MIT 9215)</name>
    <dbReference type="NCBI Taxonomy" id="93060"/>
    <lineage>
        <taxon>Bacteria</taxon>
        <taxon>Bacillati</taxon>
        <taxon>Cyanobacteriota</taxon>
        <taxon>Cyanophyceae</taxon>
        <taxon>Synechococcales</taxon>
        <taxon>Prochlorococcaceae</taxon>
        <taxon>Prochlorococcus</taxon>
    </lineage>
</organism>
<proteinExistence type="inferred from homology"/>
<protein>
    <recommendedName>
        <fullName evidence="1">ATP-dependent Clp protease ATP-binding subunit ClpX</fullName>
    </recommendedName>
</protein>
<name>CLPX_PROM2</name>
<dbReference type="EMBL" id="CP000825">
    <property type="protein sequence ID" value="ABV51543.1"/>
    <property type="molecule type" value="Genomic_DNA"/>
</dbReference>
<dbReference type="RefSeq" id="WP_012008533.1">
    <property type="nucleotide sequence ID" value="NC_009840.1"/>
</dbReference>
<dbReference type="SMR" id="A8G7G2"/>
<dbReference type="STRING" id="93060.P9215_19301"/>
<dbReference type="KEGG" id="pmh:P9215_19301"/>
<dbReference type="eggNOG" id="COG1219">
    <property type="taxonomic scope" value="Bacteria"/>
</dbReference>
<dbReference type="HOGENOM" id="CLU_014218_8_2_3"/>
<dbReference type="OrthoDB" id="9804062at2"/>
<dbReference type="Proteomes" id="UP000002014">
    <property type="component" value="Chromosome"/>
</dbReference>
<dbReference type="GO" id="GO:0009376">
    <property type="term" value="C:HslUV protease complex"/>
    <property type="evidence" value="ECO:0007669"/>
    <property type="project" value="TreeGrafter"/>
</dbReference>
<dbReference type="GO" id="GO:0005524">
    <property type="term" value="F:ATP binding"/>
    <property type="evidence" value="ECO:0007669"/>
    <property type="project" value="UniProtKB-UniRule"/>
</dbReference>
<dbReference type="GO" id="GO:0016887">
    <property type="term" value="F:ATP hydrolysis activity"/>
    <property type="evidence" value="ECO:0007669"/>
    <property type="project" value="InterPro"/>
</dbReference>
<dbReference type="GO" id="GO:0140662">
    <property type="term" value="F:ATP-dependent protein folding chaperone"/>
    <property type="evidence" value="ECO:0007669"/>
    <property type="project" value="InterPro"/>
</dbReference>
<dbReference type="GO" id="GO:0046983">
    <property type="term" value="F:protein dimerization activity"/>
    <property type="evidence" value="ECO:0007669"/>
    <property type="project" value="InterPro"/>
</dbReference>
<dbReference type="GO" id="GO:0051082">
    <property type="term" value="F:unfolded protein binding"/>
    <property type="evidence" value="ECO:0007669"/>
    <property type="project" value="UniProtKB-UniRule"/>
</dbReference>
<dbReference type="GO" id="GO:0008270">
    <property type="term" value="F:zinc ion binding"/>
    <property type="evidence" value="ECO:0007669"/>
    <property type="project" value="InterPro"/>
</dbReference>
<dbReference type="GO" id="GO:0051301">
    <property type="term" value="P:cell division"/>
    <property type="evidence" value="ECO:0007669"/>
    <property type="project" value="TreeGrafter"/>
</dbReference>
<dbReference type="GO" id="GO:0051603">
    <property type="term" value="P:proteolysis involved in protein catabolic process"/>
    <property type="evidence" value="ECO:0007669"/>
    <property type="project" value="TreeGrafter"/>
</dbReference>
<dbReference type="CDD" id="cd19497">
    <property type="entry name" value="RecA-like_ClpX"/>
    <property type="match status" value="1"/>
</dbReference>
<dbReference type="FunFam" id="1.10.8.60:FF:000002">
    <property type="entry name" value="ATP-dependent Clp protease ATP-binding subunit ClpX"/>
    <property type="match status" value="1"/>
</dbReference>
<dbReference type="FunFam" id="3.40.50.300:FF:000005">
    <property type="entry name" value="ATP-dependent Clp protease ATP-binding subunit ClpX"/>
    <property type="match status" value="1"/>
</dbReference>
<dbReference type="Gene3D" id="1.10.8.60">
    <property type="match status" value="1"/>
</dbReference>
<dbReference type="Gene3D" id="6.20.220.10">
    <property type="entry name" value="ClpX chaperone, C4-type zinc finger domain"/>
    <property type="match status" value="1"/>
</dbReference>
<dbReference type="Gene3D" id="3.40.50.300">
    <property type="entry name" value="P-loop containing nucleotide triphosphate hydrolases"/>
    <property type="match status" value="1"/>
</dbReference>
<dbReference type="HAMAP" id="MF_00175">
    <property type="entry name" value="ClpX"/>
    <property type="match status" value="1"/>
</dbReference>
<dbReference type="InterPro" id="IPR003593">
    <property type="entry name" value="AAA+_ATPase"/>
</dbReference>
<dbReference type="InterPro" id="IPR050052">
    <property type="entry name" value="ATP-dep_Clp_protease_ClpX"/>
</dbReference>
<dbReference type="InterPro" id="IPR003959">
    <property type="entry name" value="ATPase_AAA_core"/>
</dbReference>
<dbReference type="InterPro" id="IPR019489">
    <property type="entry name" value="Clp_ATPase_C"/>
</dbReference>
<dbReference type="InterPro" id="IPR004487">
    <property type="entry name" value="Clp_protease_ATP-bd_su_ClpX"/>
</dbReference>
<dbReference type="InterPro" id="IPR046425">
    <property type="entry name" value="ClpX_bact"/>
</dbReference>
<dbReference type="InterPro" id="IPR027417">
    <property type="entry name" value="P-loop_NTPase"/>
</dbReference>
<dbReference type="InterPro" id="IPR010603">
    <property type="entry name" value="Znf_CppX_C4"/>
</dbReference>
<dbReference type="InterPro" id="IPR038366">
    <property type="entry name" value="Znf_CppX_C4_sf"/>
</dbReference>
<dbReference type="NCBIfam" id="TIGR00382">
    <property type="entry name" value="clpX"/>
    <property type="match status" value="1"/>
</dbReference>
<dbReference type="NCBIfam" id="NF003745">
    <property type="entry name" value="PRK05342.1"/>
    <property type="match status" value="1"/>
</dbReference>
<dbReference type="PANTHER" id="PTHR48102:SF7">
    <property type="entry name" value="ATP-DEPENDENT CLP PROTEASE ATP-BINDING SUBUNIT CLPX-LIKE, MITOCHONDRIAL"/>
    <property type="match status" value="1"/>
</dbReference>
<dbReference type="PANTHER" id="PTHR48102">
    <property type="entry name" value="ATP-DEPENDENT CLP PROTEASE ATP-BINDING SUBUNIT CLPX-LIKE, MITOCHONDRIAL-RELATED"/>
    <property type="match status" value="1"/>
</dbReference>
<dbReference type="Pfam" id="PF07724">
    <property type="entry name" value="AAA_2"/>
    <property type="match status" value="1"/>
</dbReference>
<dbReference type="Pfam" id="PF10431">
    <property type="entry name" value="ClpB_D2-small"/>
    <property type="match status" value="1"/>
</dbReference>
<dbReference type="Pfam" id="PF06689">
    <property type="entry name" value="zf-C4_ClpX"/>
    <property type="match status" value="1"/>
</dbReference>
<dbReference type="SMART" id="SM00382">
    <property type="entry name" value="AAA"/>
    <property type="match status" value="1"/>
</dbReference>
<dbReference type="SMART" id="SM01086">
    <property type="entry name" value="ClpB_D2-small"/>
    <property type="match status" value="1"/>
</dbReference>
<dbReference type="SMART" id="SM00994">
    <property type="entry name" value="zf-C4_ClpX"/>
    <property type="match status" value="1"/>
</dbReference>
<dbReference type="SUPFAM" id="SSF57716">
    <property type="entry name" value="Glucocorticoid receptor-like (DNA-binding domain)"/>
    <property type="match status" value="1"/>
</dbReference>
<dbReference type="SUPFAM" id="SSF52540">
    <property type="entry name" value="P-loop containing nucleoside triphosphate hydrolases"/>
    <property type="match status" value="1"/>
</dbReference>
<dbReference type="PROSITE" id="PS51902">
    <property type="entry name" value="CLPX_ZB"/>
    <property type="match status" value="1"/>
</dbReference>
<comment type="function">
    <text evidence="1">ATP-dependent specificity component of the Clp protease. It directs the protease to specific substrates. Can perform chaperone functions in the absence of ClpP.</text>
</comment>
<comment type="subunit">
    <text evidence="1">Component of the ClpX-ClpP complex. Forms a hexameric ring that, in the presence of ATP, binds to fourteen ClpP subunits assembled into a disk-like structure with a central cavity, resembling the structure of eukaryotic proteasomes.</text>
</comment>
<comment type="similarity">
    <text evidence="1">Belongs to the ClpX chaperone family.</text>
</comment>
<accession>A8G7G2</accession>
<reference key="1">
    <citation type="journal article" date="2007" name="PLoS Genet.">
        <title>Patterns and implications of gene gain and loss in the evolution of Prochlorococcus.</title>
        <authorList>
            <person name="Kettler G.C."/>
            <person name="Martiny A.C."/>
            <person name="Huang K."/>
            <person name="Zucker J."/>
            <person name="Coleman M.L."/>
            <person name="Rodrigue S."/>
            <person name="Chen F."/>
            <person name="Lapidus A."/>
            <person name="Ferriera S."/>
            <person name="Johnson J."/>
            <person name="Steglich C."/>
            <person name="Church G.M."/>
            <person name="Richardson P."/>
            <person name="Chisholm S.W."/>
        </authorList>
    </citation>
    <scope>NUCLEOTIDE SEQUENCE [LARGE SCALE GENOMIC DNA]</scope>
    <source>
        <strain>MIT 9215</strain>
    </source>
</reference>
<feature type="chain" id="PRO_1000058343" description="ATP-dependent Clp protease ATP-binding subunit ClpX">
    <location>
        <begin position="1"/>
        <end position="455"/>
    </location>
</feature>
<feature type="domain" description="ClpX-type ZB" evidence="2">
    <location>
        <begin position="1"/>
        <end position="51"/>
    </location>
</feature>
<feature type="binding site" evidence="2">
    <location>
        <position position="10"/>
    </location>
    <ligand>
        <name>Zn(2+)</name>
        <dbReference type="ChEBI" id="CHEBI:29105"/>
    </ligand>
</feature>
<feature type="binding site" evidence="2">
    <location>
        <position position="13"/>
    </location>
    <ligand>
        <name>Zn(2+)</name>
        <dbReference type="ChEBI" id="CHEBI:29105"/>
    </ligand>
</feature>
<feature type="binding site" evidence="2">
    <location>
        <position position="32"/>
    </location>
    <ligand>
        <name>Zn(2+)</name>
        <dbReference type="ChEBI" id="CHEBI:29105"/>
    </ligand>
</feature>
<feature type="binding site" evidence="2">
    <location>
        <position position="35"/>
    </location>
    <ligand>
        <name>Zn(2+)</name>
        <dbReference type="ChEBI" id="CHEBI:29105"/>
    </ligand>
</feature>
<feature type="binding site" evidence="1">
    <location>
        <begin position="146"/>
        <end position="153"/>
    </location>
    <ligand>
        <name>ATP</name>
        <dbReference type="ChEBI" id="CHEBI:30616"/>
    </ligand>
</feature>
<sequence>MAKFDAHLKCSFCGKSQDQVRKLIAGPGVYICDECIDLCNEILDEELLDNQTNTNNSQQVKKKLPNDNPKKCVPLELTSIPKPLEIKSFLDNQVVGQESAKKILSVAVYNHYKRLAWKVKEESKNSNSTDSQATKLQKSNILLIGPTGSGKTLLAQTLAEFLDVPFAVADATTLTEAGYVGEDVENILLRLLQKSEMNVELAQKGIIYIDEIDKIARKSENPSITRDVSGEGVQQALLKMLEGTIANVPPQGGRKHPYHDCIQIDTSQILFICGGAFIGLEDIVQKRMGKHSIGFTTNSDQNKVDTKKIIDPRDSLKNLELDDLVKYGLIPEFIGRIPVCAVLDRLTKETLESILTQPRDALVKQFKTLLSMDNVELKFEPDSVEAIANEAFKRKTGARALRSIIEELMLDVMYTLPSEENIKEFTITKKMVDNLFSSKIVKLPSGSKRIIKESA</sequence>
<gene>
    <name evidence="1" type="primary">clpX</name>
    <name type="ordered locus">P9215_19301</name>
</gene>
<evidence type="ECO:0000255" key="1">
    <source>
        <dbReference type="HAMAP-Rule" id="MF_00175"/>
    </source>
</evidence>
<evidence type="ECO:0000255" key="2">
    <source>
        <dbReference type="PROSITE-ProRule" id="PRU01250"/>
    </source>
</evidence>
<keyword id="KW-0067">ATP-binding</keyword>
<keyword id="KW-0143">Chaperone</keyword>
<keyword id="KW-0479">Metal-binding</keyword>
<keyword id="KW-0547">Nucleotide-binding</keyword>
<keyword id="KW-0862">Zinc</keyword>